<keyword id="KW-0378">Hydrolase</keyword>
<keyword id="KW-0460">Magnesium</keyword>
<keyword id="KW-0511">Multifunctional enzyme</keyword>
<keyword id="KW-0548">Nucleotidyltransferase</keyword>
<keyword id="KW-0677">Repeat</keyword>
<keyword id="KW-0808">Transferase</keyword>
<feature type="chain" id="PRO_1000114760" description="Bifunctional uridylyltransferase/uridylyl-removing enzyme">
    <location>
        <begin position="1"/>
        <end position="890"/>
    </location>
</feature>
<feature type="domain" description="HD" evidence="2">
    <location>
        <begin position="468"/>
        <end position="590"/>
    </location>
</feature>
<feature type="domain" description="ACT 1" evidence="1">
    <location>
        <begin position="709"/>
        <end position="784"/>
    </location>
</feature>
<feature type="domain" description="ACT 2" evidence="1">
    <location>
        <begin position="816"/>
        <end position="890"/>
    </location>
</feature>
<feature type="region of interest" description="Uridylyltransferase">
    <location>
        <begin position="1"/>
        <end position="349"/>
    </location>
</feature>
<feature type="region of interest" description="Disordered" evidence="3">
    <location>
        <begin position="1"/>
        <end position="21"/>
    </location>
</feature>
<feature type="region of interest" description="Uridylyl-removing">
    <location>
        <begin position="350"/>
        <end position="708"/>
    </location>
</feature>
<sequence length="890" mass="102322">MNTLPEQHANTALPTLPDQPQNPGVWPRAELTVADIKARIDIFQHWLGEAFDSGICAEQLIEARTEFIDQLLQRLWIEAGFGQIADLALVAVGGYGRGELHPLSDIDLLILSRKKLPDEQAQKVGELLTLLWDVKLDVGHSVRTLEECLLEGLSDLTVATNLIETRLLIGDVVLFLALQKHIFSEGFWPSDKFYAAKVEEQNQRHQRYHGTSYNLEPDIKSSPGGLRDIHTLQWVARRHFGATSLDEMVGFGFLTPAERAELNECLHILWRIRFALHLVVSRYDNRLLFDRQLSVAQRLNYSGEGNDPVERMMKDYFRVTRRVSELNQMLLQLFDEAILALPADEKPRPVDDEFQLRGTLIDLRDDTLFIREPQAILRMFYMMVRNSAITGIYSTTLRHLRHARRHLSQPLCYIPEARTLFLSMLRHPGAVSRGLLPMHRHSVLWAYMPQWSHIVGQMQFDLFHAYTVDEHTIRVMLKLESFAKEETRQRHPLCVDLWPRLPHPELILIAALFHDIAKGRGGDHSVLGAQDVLTFAELHGLNSRETQLVAWLVRQHLLMSVTAQRRDIQDPEVIKQFAEEVQTETRLRFLACLTVADICATNETLWNSWKQSLLRELYFATEKQLRRGMQNTPDMRERVRHHQLQALALLRMDNIDEAALHKIWTRCRANYFVRHSPNQLAWHARHLLQHDLRQPLVLLSPQATRGGTEIFIWSPDRPYLFAAVCAELDRRNLSVHDAQIFTTRDGMAMDTFIVLEPDGSPLAADRHDVIRTGLEQTITQRSWQPPQPRRQPAKLRHFTVETEVNFLPTHTDRKSFMELIALDQPGLLARVGQIFADLGISLHGARITTIGERVEDLFIIATADRRALNNVLQLEVQQRLTAALNPNDKG</sequence>
<organism>
    <name type="scientific">Salmonella dublin (strain CT_02021853)</name>
    <dbReference type="NCBI Taxonomy" id="439851"/>
    <lineage>
        <taxon>Bacteria</taxon>
        <taxon>Pseudomonadati</taxon>
        <taxon>Pseudomonadota</taxon>
        <taxon>Gammaproteobacteria</taxon>
        <taxon>Enterobacterales</taxon>
        <taxon>Enterobacteriaceae</taxon>
        <taxon>Salmonella</taxon>
    </lineage>
</organism>
<comment type="function">
    <text evidence="1">Modifies, by uridylylation and deuridylylation, the PII regulatory proteins (GlnB and homologs), in response to the nitrogen status of the cell that GlnD senses through the glutamine level. Under low glutamine levels, catalyzes the conversion of the PII proteins and UTP to PII-UMP and PPi, while under higher glutamine levels, GlnD hydrolyzes PII-UMP to PII and UMP (deuridylylation). Thus, controls uridylylation state and activity of the PII proteins, and plays an important role in the regulation of nitrogen assimilation and metabolism.</text>
</comment>
<comment type="catalytic activity">
    <reaction evidence="1">
        <text>[protein-PII]-L-tyrosine + UTP = [protein-PII]-uridylyl-L-tyrosine + diphosphate</text>
        <dbReference type="Rhea" id="RHEA:13673"/>
        <dbReference type="Rhea" id="RHEA-COMP:12147"/>
        <dbReference type="Rhea" id="RHEA-COMP:12148"/>
        <dbReference type="ChEBI" id="CHEBI:33019"/>
        <dbReference type="ChEBI" id="CHEBI:46398"/>
        <dbReference type="ChEBI" id="CHEBI:46858"/>
        <dbReference type="ChEBI" id="CHEBI:90602"/>
        <dbReference type="EC" id="2.7.7.59"/>
    </reaction>
</comment>
<comment type="catalytic activity">
    <reaction evidence="1">
        <text>[protein-PII]-uridylyl-L-tyrosine + H2O = [protein-PII]-L-tyrosine + UMP + H(+)</text>
        <dbReference type="Rhea" id="RHEA:48600"/>
        <dbReference type="Rhea" id="RHEA-COMP:12147"/>
        <dbReference type="Rhea" id="RHEA-COMP:12148"/>
        <dbReference type="ChEBI" id="CHEBI:15377"/>
        <dbReference type="ChEBI" id="CHEBI:15378"/>
        <dbReference type="ChEBI" id="CHEBI:46858"/>
        <dbReference type="ChEBI" id="CHEBI:57865"/>
        <dbReference type="ChEBI" id="CHEBI:90602"/>
    </reaction>
</comment>
<comment type="cofactor">
    <cofactor evidence="1">
        <name>Mg(2+)</name>
        <dbReference type="ChEBI" id="CHEBI:18420"/>
    </cofactor>
</comment>
<comment type="activity regulation">
    <text evidence="1">Uridylyltransferase (UTase) activity is inhibited by glutamine, while glutamine activates uridylyl-removing (UR) activity.</text>
</comment>
<comment type="domain">
    <text evidence="1">Has four distinct domains: an N-terminal nucleotidyltransferase (NT) domain responsible for UTase activity, a central HD domain that encodes UR activity, and two C-terminal ACT domains that seem to have a role in glutamine sensing.</text>
</comment>
<comment type="similarity">
    <text evidence="1">Belongs to the GlnD family.</text>
</comment>
<dbReference type="EC" id="2.7.7.59" evidence="1"/>
<dbReference type="EC" id="3.1.4.-" evidence="1"/>
<dbReference type="EMBL" id="CP001144">
    <property type="protein sequence ID" value="ACH76947.1"/>
    <property type="molecule type" value="Genomic_DNA"/>
</dbReference>
<dbReference type="RefSeq" id="WP_001675797.1">
    <property type="nucleotide sequence ID" value="NC_011205.1"/>
</dbReference>
<dbReference type="SMR" id="B5FJ14"/>
<dbReference type="KEGG" id="sed:SeD_A0235"/>
<dbReference type="HOGENOM" id="CLU_012833_0_0_6"/>
<dbReference type="Proteomes" id="UP000008322">
    <property type="component" value="Chromosome"/>
</dbReference>
<dbReference type="GO" id="GO:0008773">
    <property type="term" value="F:[protein-PII] uridylyltransferase activity"/>
    <property type="evidence" value="ECO:0007669"/>
    <property type="project" value="UniProtKB-UniRule"/>
</dbReference>
<dbReference type="GO" id="GO:0008081">
    <property type="term" value="F:phosphoric diester hydrolase activity"/>
    <property type="evidence" value="ECO:0007669"/>
    <property type="project" value="UniProtKB-UniRule"/>
</dbReference>
<dbReference type="GO" id="GO:0006808">
    <property type="term" value="P:regulation of nitrogen utilization"/>
    <property type="evidence" value="ECO:0007669"/>
    <property type="project" value="UniProtKB-UniRule"/>
</dbReference>
<dbReference type="CDD" id="cd04899">
    <property type="entry name" value="ACT_ACR-UUR-like_2"/>
    <property type="match status" value="1"/>
</dbReference>
<dbReference type="CDD" id="cd04900">
    <property type="entry name" value="ACT_UUR-like_1"/>
    <property type="match status" value="1"/>
</dbReference>
<dbReference type="CDD" id="cd00077">
    <property type="entry name" value="HDc"/>
    <property type="match status" value="1"/>
</dbReference>
<dbReference type="CDD" id="cd05401">
    <property type="entry name" value="NT_GlnE_GlnD_like"/>
    <property type="match status" value="1"/>
</dbReference>
<dbReference type="FunFam" id="1.10.3210.10:FF:000005">
    <property type="entry name" value="Bifunctional uridylyltransferase/uridylyl-removing enzyme"/>
    <property type="match status" value="1"/>
</dbReference>
<dbReference type="Gene3D" id="1.10.3210.10">
    <property type="entry name" value="Hypothetical protein af1432"/>
    <property type="match status" value="1"/>
</dbReference>
<dbReference type="Gene3D" id="1.20.120.330">
    <property type="entry name" value="Nucleotidyltransferases domain 2"/>
    <property type="match status" value="1"/>
</dbReference>
<dbReference type="HAMAP" id="MF_00277">
    <property type="entry name" value="PII_uridylyl_transf"/>
    <property type="match status" value="1"/>
</dbReference>
<dbReference type="InterPro" id="IPR045865">
    <property type="entry name" value="ACT-like_dom_sf"/>
</dbReference>
<dbReference type="InterPro" id="IPR002912">
    <property type="entry name" value="ACT_dom"/>
</dbReference>
<dbReference type="InterPro" id="IPR003607">
    <property type="entry name" value="HD/PDEase_dom"/>
</dbReference>
<dbReference type="InterPro" id="IPR006674">
    <property type="entry name" value="HD_domain"/>
</dbReference>
<dbReference type="InterPro" id="IPR043519">
    <property type="entry name" value="NT_sf"/>
</dbReference>
<dbReference type="InterPro" id="IPR013546">
    <property type="entry name" value="PII_UdlTrfase/GS_AdlTrfase"/>
</dbReference>
<dbReference type="InterPro" id="IPR002934">
    <property type="entry name" value="Polymerase_NTP_transf_dom"/>
</dbReference>
<dbReference type="InterPro" id="IPR010043">
    <property type="entry name" value="UTase/UR"/>
</dbReference>
<dbReference type="NCBIfam" id="NF002487">
    <property type="entry name" value="PRK01759.1"/>
    <property type="match status" value="1"/>
</dbReference>
<dbReference type="NCBIfam" id="NF003448">
    <property type="entry name" value="PRK05007.1"/>
    <property type="match status" value="1"/>
</dbReference>
<dbReference type="NCBIfam" id="TIGR01693">
    <property type="entry name" value="UTase_glnD"/>
    <property type="match status" value="1"/>
</dbReference>
<dbReference type="PANTHER" id="PTHR47320">
    <property type="entry name" value="BIFUNCTIONAL URIDYLYLTRANSFERASE/URIDYLYL-REMOVING ENZYME"/>
    <property type="match status" value="1"/>
</dbReference>
<dbReference type="PANTHER" id="PTHR47320:SF1">
    <property type="entry name" value="BIFUNCTIONAL URIDYLYLTRANSFERASE_URIDYLYL-REMOVING ENZYME"/>
    <property type="match status" value="1"/>
</dbReference>
<dbReference type="Pfam" id="PF01842">
    <property type="entry name" value="ACT"/>
    <property type="match status" value="2"/>
</dbReference>
<dbReference type="Pfam" id="PF08335">
    <property type="entry name" value="GlnD_UR_UTase"/>
    <property type="match status" value="1"/>
</dbReference>
<dbReference type="Pfam" id="PF01966">
    <property type="entry name" value="HD"/>
    <property type="match status" value="1"/>
</dbReference>
<dbReference type="Pfam" id="PF01909">
    <property type="entry name" value="NTP_transf_2"/>
    <property type="match status" value="1"/>
</dbReference>
<dbReference type="PIRSF" id="PIRSF006288">
    <property type="entry name" value="PII_uridyltransf"/>
    <property type="match status" value="1"/>
</dbReference>
<dbReference type="SMART" id="SM00471">
    <property type="entry name" value="HDc"/>
    <property type="match status" value="1"/>
</dbReference>
<dbReference type="SUPFAM" id="SSF55021">
    <property type="entry name" value="ACT-like"/>
    <property type="match status" value="2"/>
</dbReference>
<dbReference type="SUPFAM" id="SSF109604">
    <property type="entry name" value="HD-domain/PDEase-like"/>
    <property type="match status" value="1"/>
</dbReference>
<dbReference type="SUPFAM" id="SSF81301">
    <property type="entry name" value="Nucleotidyltransferase"/>
    <property type="match status" value="1"/>
</dbReference>
<dbReference type="SUPFAM" id="SSF81593">
    <property type="entry name" value="Nucleotidyltransferase substrate binding subunit/domain"/>
    <property type="match status" value="1"/>
</dbReference>
<dbReference type="PROSITE" id="PS51671">
    <property type="entry name" value="ACT"/>
    <property type="match status" value="2"/>
</dbReference>
<dbReference type="PROSITE" id="PS51831">
    <property type="entry name" value="HD"/>
    <property type="match status" value="1"/>
</dbReference>
<evidence type="ECO:0000255" key="1">
    <source>
        <dbReference type="HAMAP-Rule" id="MF_00277"/>
    </source>
</evidence>
<evidence type="ECO:0000255" key="2">
    <source>
        <dbReference type="PROSITE-ProRule" id="PRU01175"/>
    </source>
</evidence>
<evidence type="ECO:0000256" key="3">
    <source>
        <dbReference type="SAM" id="MobiDB-lite"/>
    </source>
</evidence>
<protein>
    <recommendedName>
        <fullName evidence="1">Bifunctional uridylyltransferase/uridylyl-removing enzyme</fullName>
        <shortName evidence="1">UTase/UR</shortName>
    </recommendedName>
    <alternativeName>
        <fullName evidence="1">Bifunctional [protein-PII] modification enzyme</fullName>
    </alternativeName>
    <alternativeName>
        <fullName evidence="1">Bifunctional nitrogen sensor protein</fullName>
    </alternativeName>
    <domain>
        <recommendedName>
            <fullName evidence="1">[Protein-PII] uridylyltransferase</fullName>
            <shortName evidence="1">PII uridylyltransferase</shortName>
            <shortName evidence="1">UTase</shortName>
            <ecNumber evidence="1">2.7.7.59</ecNumber>
        </recommendedName>
    </domain>
    <domain>
        <recommendedName>
            <fullName evidence="1">[Protein-PII]-UMP uridylyl-removing enzyme</fullName>
            <shortName evidence="1">UR</shortName>
            <ecNumber evidence="1">3.1.4.-</ecNumber>
        </recommendedName>
    </domain>
</protein>
<name>GLND_SALDC</name>
<proteinExistence type="inferred from homology"/>
<gene>
    <name evidence="1" type="primary">glnD</name>
    <name type="ordered locus">SeD_A0235</name>
</gene>
<accession>B5FJ14</accession>
<reference key="1">
    <citation type="journal article" date="2011" name="J. Bacteriol.">
        <title>Comparative genomics of 28 Salmonella enterica isolates: evidence for CRISPR-mediated adaptive sublineage evolution.</title>
        <authorList>
            <person name="Fricke W.F."/>
            <person name="Mammel M.K."/>
            <person name="McDermott P.F."/>
            <person name="Tartera C."/>
            <person name="White D.G."/>
            <person name="Leclerc J.E."/>
            <person name="Ravel J."/>
            <person name="Cebula T.A."/>
        </authorList>
    </citation>
    <scope>NUCLEOTIDE SEQUENCE [LARGE SCALE GENOMIC DNA]</scope>
    <source>
        <strain>CT_02021853</strain>
    </source>
</reference>